<accession>Q9BYG5</accession>
<accession>A2A2A7</accession>
<accession>Q9Y510</accession>
<name>PAR6B_HUMAN</name>
<reference key="1">
    <citation type="journal article" date="2001" name="Genes Cells">
        <title>Human homologues of the Caenorhabditis elegans cell polarity protein PAR6 as an adaptor that links the small GTPases Rac and Cdc42 to atypical protein kinase C.</title>
        <authorList>
            <person name="Noda Y."/>
            <person name="Takeya R."/>
            <person name="Ohno S."/>
            <person name="Naito S."/>
            <person name="Ito T."/>
            <person name="Sumimoto H."/>
        </authorList>
    </citation>
    <scope>NUCLEOTIDE SEQUENCE [MRNA] (ISOFORM 1)</scope>
    <scope>INTERACTION WITH PRKCI; PRKCZ; RAC1 AND CDC42</scope>
    <source>
        <tissue>Neuroblastoma</tissue>
    </source>
</reference>
<reference key="2">
    <citation type="submission" date="2004-05" db="EMBL/GenBank/DDBJ databases">
        <title>Splicing variants of the cell polarity protein PAR-6.</title>
        <authorList>
            <person name="Noda Y."/>
            <person name="Kohjima M."/>
            <person name="Izaki T."/>
            <person name="Sumimoto H."/>
        </authorList>
    </citation>
    <scope>NUCLEOTIDE SEQUENCE [MRNA] (ISOFORM 2)</scope>
</reference>
<reference key="3">
    <citation type="journal article" date="2001" name="Nature">
        <title>The DNA sequence and comparative analysis of human chromosome 20.</title>
        <authorList>
            <person name="Deloukas P."/>
            <person name="Matthews L.H."/>
            <person name="Ashurst J.L."/>
            <person name="Burton J."/>
            <person name="Gilbert J.G.R."/>
            <person name="Jones M."/>
            <person name="Stavrides G."/>
            <person name="Almeida J.P."/>
            <person name="Babbage A.K."/>
            <person name="Bagguley C.L."/>
            <person name="Bailey J."/>
            <person name="Barlow K.F."/>
            <person name="Bates K.N."/>
            <person name="Beard L.M."/>
            <person name="Beare D.M."/>
            <person name="Beasley O.P."/>
            <person name="Bird C.P."/>
            <person name="Blakey S.E."/>
            <person name="Bridgeman A.M."/>
            <person name="Brown A.J."/>
            <person name="Buck D."/>
            <person name="Burrill W.D."/>
            <person name="Butler A.P."/>
            <person name="Carder C."/>
            <person name="Carter N.P."/>
            <person name="Chapman J.C."/>
            <person name="Clamp M."/>
            <person name="Clark G."/>
            <person name="Clark L.N."/>
            <person name="Clark S.Y."/>
            <person name="Clee C.M."/>
            <person name="Clegg S."/>
            <person name="Cobley V.E."/>
            <person name="Collier R.E."/>
            <person name="Connor R.E."/>
            <person name="Corby N.R."/>
            <person name="Coulson A."/>
            <person name="Coville G.J."/>
            <person name="Deadman R."/>
            <person name="Dhami P.D."/>
            <person name="Dunn M."/>
            <person name="Ellington A.G."/>
            <person name="Frankland J.A."/>
            <person name="Fraser A."/>
            <person name="French L."/>
            <person name="Garner P."/>
            <person name="Grafham D.V."/>
            <person name="Griffiths C."/>
            <person name="Griffiths M.N.D."/>
            <person name="Gwilliam R."/>
            <person name="Hall R.E."/>
            <person name="Hammond S."/>
            <person name="Harley J.L."/>
            <person name="Heath P.D."/>
            <person name="Ho S."/>
            <person name="Holden J.L."/>
            <person name="Howden P.J."/>
            <person name="Huckle E."/>
            <person name="Hunt A.R."/>
            <person name="Hunt S.E."/>
            <person name="Jekosch K."/>
            <person name="Johnson C.M."/>
            <person name="Johnson D."/>
            <person name="Kay M.P."/>
            <person name="Kimberley A.M."/>
            <person name="King A."/>
            <person name="Knights A."/>
            <person name="Laird G.K."/>
            <person name="Lawlor S."/>
            <person name="Lehvaeslaiho M.H."/>
            <person name="Leversha M.A."/>
            <person name="Lloyd C."/>
            <person name="Lloyd D.M."/>
            <person name="Lovell J.D."/>
            <person name="Marsh V.L."/>
            <person name="Martin S.L."/>
            <person name="McConnachie L.J."/>
            <person name="McLay K."/>
            <person name="McMurray A.A."/>
            <person name="Milne S.A."/>
            <person name="Mistry D."/>
            <person name="Moore M.J.F."/>
            <person name="Mullikin J.C."/>
            <person name="Nickerson T."/>
            <person name="Oliver K."/>
            <person name="Parker A."/>
            <person name="Patel R."/>
            <person name="Pearce T.A.V."/>
            <person name="Peck A.I."/>
            <person name="Phillimore B.J.C.T."/>
            <person name="Prathalingam S.R."/>
            <person name="Plumb R.W."/>
            <person name="Ramsay H."/>
            <person name="Rice C.M."/>
            <person name="Ross M.T."/>
            <person name="Scott C.E."/>
            <person name="Sehra H.K."/>
            <person name="Shownkeen R."/>
            <person name="Sims S."/>
            <person name="Skuce C.D."/>
            <person name="Smith M.L."/>
            <person name="Soderlund C."/>
            <person name="Steward C.A."/>
            <person name="Sulston J.E."/>
            <person name="Swann R.M."/>
            <person name="Sycamore N."/>
            <person name="Taylor R."/>
            <person name="Tee L."/>
            <person name="Thomas D.W."/>
            <person name="Thorpe A."/>
            <person name="Tracey A."/>
            <person name="Tromans A.C."/>
            <person name="Vaudin M."/>
            <person name="Wall M."/>
            <person name="Wallis J.M."/>
            <person name="Whitehead S.L."/>
            <person name="Whittaker P."/>
            <person name="Willey D.L."/>
            <person name="Williams L."/>
            <person name="Williams S.A."/>
            <person name="Wilming L."/>
            <person name="Wray P.W."/>
            <person name="Hubbard T."/>
            <person name="Durbin R.M."/>
            <person name="Bentley D.R."/>
            <person name="Beck S."/>
            <person name="Rogers J."/>
        </authorList>
    </citation>
    <scope>NUCLEOTIDE SEQUENCE [LARGE SCALE GENOMIC DNA]</scope>
</reference>
<reference key="4">
    <citation type="journal article" date="2004" name="Genome Res.">
        <title>The status, quality, and expansion of the NIH full-length cDNA project: the Mammalian Gene Collection (MGC).</title>
        <authorList>
            <consortium name="The MGC Project Team"/>
        </authorList>
    </citation>
    <scope>NUCLEOTIDE SEQUENCE [LARGE SCALE MRNA] (ISOFORM 1)</scope>
    <source>
        <tissue>Placenta</tissue>
    </source>
</reference>
<reference key="5">
    <citation type="journal article" date="2002" name="Gene">
        <title>Multiple splice variants of Par3 and of a novel related gene, Par3L, produce proteins with different binding properties.</title>
        <authorList>
            <person name="Gao L."/>
            <person name="Macara I.G."/>
            <person name="Joberty G."/>
        </authorList>
    </citation>
    <scope>INTERACTION WITH PARD3B AND PARD3</scope>
</reference>
<reference key="6">
    <citation type="journal article" date="2003" name="Curr. Biol.">
        <title>Mammalian Lgl forms a protein complex with PAR-6 and aPKC independently of PAR-3 to regulate epithelial cell polarity.</title>
        <authorList>
            <person name="Yamanaka T."/>
            <person name="Horikoshi Y."/>
            <person name="Sugiyama Y."/>
            <person name="Ishiyama C."/>
            <person name="Suzuki A."/>
            <person name="Hirose T."/>
            <person name="Iwamatsu A."/>
            <person name="Shinohara A."/>
            <person name="Ohno S."/>
        </authorList>
    </citation>
    <scope>INTERACTION WITH LLGL1 AND PRKCI</scope>
</reference>
<reference key="7">
    <citation type="journal article" date="2004" name="Mol. Cell. Biol.">
        <title>Nucleotide exchange factor ECT2 interacts with the polarity protein complex Par6/Par3/protein kinase Czeta (PKCzeta) and regulates PKCzeta activity.</title>
        <authorList>
            <person name="Liu X.F."/>
            <person name="Ishida H."/>
            <person name="Raziuddin R."/>
            <person name="Miki T."/>
        </authorList>
    </citation>
    <scope>INTERACTION WITH ECT2</scope>
</reference>
<reference key="8">
    <citation type="journal article" date="2011" name="Sci. Signal.">
        <title>System-wide temporal characterization of the proteome and phosphoproteome of human embryonic stem cell differentiation.</title>
        <authorList>
            <person name="Rigbolt K.T."/>
            <person name="Prokhorova T.A."/>
            <person name="Akimov V."/>
            <person name="Henningsen J."/>
            <person name="Johansen P.T."/>
            <person name="Kratchmarova I."/>
            <person name="Kassem M."/>
            <person name="Mann M."/>
            <person name="Olsen J.V."/>
            <person name="Blagoev B."/>
        </authorList>
    </citation>
    <scope>PHOSPHORYLATION [LARGE SCALE ANALYSIS] AT SER-11</scope>
    <scope>IDENTIFICATION BY MASS SPECTROMETRY [LARGE SCALE ANALYSIS]</scope>
</reference>
<reference key="9">
    <citation type="journal article" date="2013" name="J. Proteome Res.">
        <title>Toward a comprehensive characterization of a human cancer cell phosphoproteome.</title>
        <authorList>
            <person name="Zhou H."/>
            <person name="Di Palma S."/>
            <person name="Preisinger C."/>
            <person name="Peng M."/>
            <person name="Polat A.N."/>
            <person name="Heck A.J."/>
            <person name="Mohammed S."/>
        </authorList>
    </citation>
    <scope>PHOSPHORYLATION [LARGE SCALE ANALYSIS] AT SER-11</scope>
    <scope>IDENTIFICATION BY MASS SPECTROMETRY [LARGE SCALE ANALYSIS]</scope>
    <source>
        <tissue>Erythroleukemia</tissue>
    </source>
</reference>
<evidence type="ECO:0000250" key="1"/>
<evidence type="ECO:0000255" key="2">
    <source>
        <dbReference type="PROSITE-ProRule" id="PRU00143"/>
    </source>
</evidence>
<evidence type="ECO:0000255" key="3">
    <source>
        <dbReference type="PROSITE-ProRule" id="PRU01081"/>
    </source>
</evidence>
<evidence type="ECO:0000256" key="4">
    <source>
        <dbReference type="SAM" id="MobiDB-lite"/>
    </source>
</evidence>
<evidence type="ECO:0000269" key="5">
    <source>
    </source>
</evidence>
<evidence type="ECO:0000269" key="6">
    <source>
    </source>
</evidence>
<evidence type="ECO:0000269" key="7">
    <source>
    </source>
</evidence>
<evidence type="ECO:0000269" key="8">
    <source>
    </source>
</evidence>
<evidence type="ECO:0000303" key="9">
    <source ref="2"/>
</evidence>
<evidence type="ECO:0000305" key="10"/>
<evidence type="ECO:0007744" key="11">
    <source>
    </source>
</evidence>
<evidence type="ECO:0007744" key="12">
    <source>
    </source>
</evidence>
<proteinExistence type="evidence at protein level"/>
<keyword id="KW-0025">Alternative splicing</keyword>
<keyword id="KW-0131">Cell cycle</keyword>
<keyword id="KW-0132">Cell division</keyword>
<keyword id="KW-0965">Cell junction</keyword>
<keyword id="KW-1003">Cell membrane</keyword>
<keyword id="KW-0963">Cytoplasm</keyword>
<keyword id="KW-0472">Membrane</keyword>
<keyword id="KW-0597">Phosphoprotein</keyword>
<keyword id="KW-1267">Proteomics identification</keyword>
<keyword id="KW-1185">Reference proteome</keyword>
<keyword id="KW-0796">Tight junction</keyword>
<sequence>MNRSHRHGAGSGCLGTMEVKSKFGAEFRRFSLERSKPGKFEEFYGLLQHVHKIPNVDVLVGYADIHGDLLPINNDDNYHKAVSTANPLLRIFIQKKEEADYSAFGTDTLIKKKNVLTNVLRPDNHRKKPHIVISMPQDFRPVSSIIDVDILPETHRRVRLYKYGTEKPLGFYIRDGSSVRVTPHGLEKVPGIFISRLVPGGLAQSTGLLAVNDEVLEVNGIEVSGKSLDQVTDMMIANSRNLIITVRPANQRNNVVRNSRTSGSSGQSTDNSLLGYPQQIEPSFEPEDEDSEEDDIIIEDNGVPQQIPKAVPNTESLESLTQIELSFESGQNGFIPSNEVSLAAIASSSNTEFETHAPDQKLLEEDGTIITL</sequence>
<protein>
    <recommendedName>
        <fullName>Partitioning defective 6 homolog beta</fullName>
        <shortName>PAR-6 beta</shortName>
        <shortName>PAR-6B</shortName>
    </recommendedName>
</protein>
<comment type="function">
    <text>Adapter protein involved in asymmetrical cell division and cell polarization processes. Probably involved in formation of epithelial tight junctions. Association with PARD3 may prevent the interaction of PARD3 with F11R/JAM1, thereby preventing tight junction assembly. The PARD6-PARD3 complex links GTP-bound Rho small GTPases to atypical protein kinase C proteins.</text>
</comment>
<comment type="subunit">
    <text evidence="1 5 6 7 8">Interacts with PARD3. Interacts with GTP-bound forms of CDC42 and RAC1. Interacts with GTP-bound RHOQ/TC10. Interacts with PALS1 (By similarity). Interacts with the N-terminal part of PRKCI and PRKCZ. Part of a complex with PARD3, CDC42 or RAC1 and PRKCI or PRKCZ. Part of a complex with LLGL1 and PRKCI. Interacts with PARD3B. Interacts with ECT2.</text>
</comment>
<comment type="interaction">
    <interactant intactId="EBI-295391">
        <id>Q9BYG5</id>
    </interactant>
    <interactant intactId="EBI-11524452">
        <id>Q8N9N5-2</id>
        <label>BANP</label>
    </interactant>
    <organismsDiffer>false</organismsDiffer>
    <experiments>3</experiments>
</comment>
<comment type="interaction">
    <interactant intactId="EBI-295391">
        <id>Q9BYG5</id>
    </interactant>
    <interactant intactId="EBI-81752">
        <id>P60953</id>
        <label>CDC42</label>
    </interactant>
    <organismsDiffer>false</organismsDiffer>
    <experiments>18</experiments>
</comment>
<comment type="interaction">
    <interactant intactId="EBI-295391">
        <id>Q9BYG5</id>
    </interactant>
    <interactant intactId="EBI-1773949">
        <id>Q9BXL8</id>
        <label>CDCA4</label>
    </interactant>
    <organismsDiffer>false</organismsDiffer>
    <experiments>3</experiments>
</comment>
<comment type="interaction">
    <interactant intactId="EBI-295391">
        <id>Q9BYG5</id>
    </interactant>
    <interactant intactId="EBI-742887">
        <id>Q8TAP6</id>
        <label>CEP76</label>
    </interactant>
    <organismsDiffer>false</organismsDiffer>
    <experiments>6</experiments>
</comment>
<comment type="interaction">
    <interactant intactId="EBI-295391">
        <id>Q9BYG5</id>
    </interactant>
    <interactant intactId="EBI-10172181">
        <id>Q53SE7</id>
        <label>FLJ13057</label>
    </interactant>
    <organismsDiffer>false</organismsDiffer>
    <experiments>3</experiments>
</comment>
<comment type="interaction">
    <interactant intactId="EBI-295391">
        <id>Q9BYG5</id>
    </interactant>
    <interactant intactId="EBI-13213391">
        <id>Q96NE9-2</id>
        <label>FRMD6</label>
    </interactant>
    <organismsDiffer>false</organismsDiffer>
    <experiments>3</experiments>
</comment>
<comment type="interaction">
    <interactant intactId="EBI-295391">
        <id>Q9BYG5</id>
    </interactant>
    <interactant intactId="EBI-2548508">
        <id>Q96IK5</id>
        <label>GMCL1</label>
    </interactant>
    <organismsDiffer>false</organismsDiffer>
    <experiments>3</experiments>
</comment>
<comment type="interaction">
    <interactant intactId="EBI-295391">
        <id>Q9BYG5</id>
    </interactant>
    <interactant intactId="EBI-618309">
        <id>Q08379</id>
        <label>GOLGA2</label>
    </interactant>
    <organismsDiffer>false</organismsDiffer>
    <experiments>3</experiments>
</comment>
<comment type="interaction">
    <interactant intactId="EBI-295391">
        <id>Q9BYG5</id>
    </interactant>
    <interactant intactId="EBI-7116203">
        <id>O75031</id>
        <label>HSF2BP</label>
    </interactant>
    <organismsDiffer>false</organismsDiffer>
    <experiments>3</experiments>
</comment>
<comment type="interaction">
    <interactant intactId="EBI-295391">
        <id>Q9BYG5</id>
    </interactant>
    <interactant intactId="EBI-746778">
        <id>Q96A72</id>
        <label>MAGOHB</label>
    </interactant>
    <organismsDiffer>false</organismsDiffer>
    <experiments>3</experiments>
</comment>
<comment type="interaction">
    <interactant intactId="EBI-295391">
        <id>Q9BYG5</id>
    </interactant>
    <interactant intactId="EBI-81968">
        <id>Q8TEW0</id>
        <label>PARD3</label>
    </interactant>
    <organismsDiffer>false</organismsDiffer>
    <experiments>7</experiments>
</comment>
<comment type="interaction">
    <interactant intactId="EBI-295391">
        <id>Q9BYG5</id>
    </interactant>
    <interactant intactId="EBI-302345">
        <id>Q8ND90</id>
        <label>PNMA1</label>
    </interactant>
    <organismsDiffer>false</organismsDiffer>
    <experiments>2</experiments>
</comment>
<comment type="interaction">
    <interactant intactId="EBI-295391">
        <id>Q9BYG5</id>
    </interactant>
    <interactant intactId="EBI-286199">
        <id>P41743</id>
        <label>PRKCI</label>
    </interactant>
    <organismsDiffer>false</organismsDiffer>
    <experiments>25</experiments>
</comment>
<comment type="interaction">
    <interactant intactId="EBI-295391">
        <id>Q9BYG5</id>
    </interactant>
    <interactant intactId="EBI-295351">
        <id>Q05513</id>
        <label>PRKCZ</label>
    </interactant>
    <organismsDiffer>false</organismsDiffer>
    <experiments>18</experiments>
</comment>
<comment type="interaction">
    <interactant intactId="EBI-295391">
        <id>Q9BYG5</id>
    </interactant>
    <interactant intactId="EBI-413628">
        <id>P63000</id>
        <label>RAC1</label>
    </interactant>
    <organismsDiffer>false</organismsDiffer>
    <experiments>3</experiments>
</comment>
<comment type="interaction">
    <interactant intactId="EBI-295391">
        <id>Q9BYG5</id>
    </interactant>
    <interactant intactId="EBI-767084">
        <id>P60763</id>
        <label>RAC3</label>
    </interactant>
    <organismsDiffer>false</organismsDiffer>
    <experiments>3</experiments>
</comment>
<comment type="interaction">
    <interactant intactId="EBI-295391">
        <id>Q9BYG5</id>
    </interactant>
    <interactant intactId="EBI-2845202">
        <id>Q86WH2</id>
        <label>RASSF3</label>
    </interactant>
    <organismsDiffer>false</organismsDiffer>
    <experiments>3</experiments>
</comment>
<comment type="interaction">
    <interactant intactId="EBI-295391">
        <id>Q9BYG5</id>
    </interactant>
    <interactant intactId="EBI-6285694">
        <id>Q9H4E5</id>
        <label>RHOJ</label>
    </interactant>
    <organismsDiffer>false</organismsDiffer>
    <experiments>7</experiments>
</comment>
<comment type="interaction">
    <interactant intactId="EBI-295391">
        <id>Q9BYG5</id>
    </interactant>
    <interactant intactId="EBI-689202">
        <id>P17081</id>
        <label>RHOQ</label>
    </interactant>
    <organismsDiffer>false</organismsDiffer>
    <experiments>3</experiments>
</comment>
<comment type="interaction">
    <interactant intactId="EBI-295391">
        <id>Q9BYG5</id>
    </interactant>
    <interactant intactId="EBI-492476">
        <id>Q96RU7</id>
        <label>TRIB3</label>
    </interactant>
    <organismsDiffer>false</organismsDiffer>
    <experiments>3</experiments>
</comment>
<comment type="interaction">
    <interactant intactId="EBI-295391">
        <id>Q9BYG5</id>
    </interactant>
    <interactant intactId="EBI-17716262">
        <id>Q9UPQ4-2</id>
        <label>TRIM35</label>
    </interactant>
    <organismsDiffer>false</organismsDiffer>
    <experiments>3</experiments>
</comment>
<comment type="interaction">
    <interactant intactId="EBI-295391">
        <id>Q9BYG5</id>
    </interactant>
    <interactant intactId="EBI-306940">
        <id>Q04917</id>
        <label>YWHAH</label>
    </interactant>
    <organismsDiffer>false</organismsDiffer>
    <experiments>3</experiments>
</comment>
<comment type="interaction">
    <interactant intactId="EBI-295391">
        <id>Q9BYG5</id>
    </interactant>
    <interactant intactId="EBI-7252920">
        <id>Q8NAM6</id>
        <label>ZSCAN4</label>
    </interactant>
    <organismsDiffer>false</organismsDiffer>
    <experiments>3</experiments>
</comment>
<comment type="subcellular location">
    <subcellularLocation>
        <location>Cytoplasm</location>
    </subcellularLocation>
    <subcellularLocation>
        <location evidence="1">Cell membrane</location>
    </subcellularLocation>
    <subcellularLocation>
        <location evidence="1">Cell junction</location>
        <location evidence="1">Tight junction</location>
    </subcellularLocation>
</comment>
<comment type="alternative products">
    <event type="alternative splicing"/>
    <isoform>
        <id>Q9BYG5-1</id>
        <name>1</name>
        <sequence type="displayed"/>
    </isoform>
    <isoform>
        <id>Q9BYG5-2</id>
        <name>2</name>
        <sequence type="described" ref="VSP_053311 VSP_053312"/>
    </isoform>
</comment>
<comment type="tissue specificity">
    <text>Expressed in pancreas and in both adult and fetal kidney. Weakly expressed in placenta and lung. Not expressed in other tissues.</text>
</comment>
<comment type="domain">
    <text>The pseudo-CRIB domain together with the PDZ domain is required for the interaction with Rho small GTPases.</text>
</comment>
<comment type="domain">
    <text evidence="1">The PDZ domain mediates interaction with PALS1.</text>
</comment>
<comment type="similarity">
    <text evidence="10">Belongs to the PAR6 family.</text>
</comment>
<dbReference type="EMBL" id="AB044555">
    <property type="protein sequence ID" value="BAB40756.1"/>
    <property type="molecule type" value="mRNA"/>
</dbReference>
<dbReference type="EMBL" id="AB178534">
    <property type="protein sequence ID" value="BAF92013.1"/>
    <property type="molecule type" value="mRNA"/>
</dbReference>
<dbReference type="EMBL" id="AL031680">
    <property type="status" value="NOT_ANNOTATED_CDS"/>
    <property type="molecule type" value="Genomic_DNA"/>
</dbReference>
<dbReference type="EMBL" id="BC060847">
    <property type="protein sequence ID" value="AAH60847.1"/>
    <property type="molecule type" value="mRNA"/>
</dbReference>
<dbReference type="CCDS" id="CCDS33485.1">
    <molecule id="Q9BYG5-1"/>
</dbReference>
<dbReference type="RefSeq" id="NP_115910.1">
    <molecule id="Q9BYG5-1"/>
    <property type="nucleotide sequence ID" value="NM_032521.3"/>
</dbReference>
<dbReference type="SMR" id="Q9BYG5"/>
<dbReference type="BioGRID" id="124145">
    <property type="interactions" value="143"/>
</dbReference>
<dbReference type="ComplexPortal" id="CPX-6193">
    <property type="entry name" value="PAR cell polarity complex, PARD6B-PRKCI variant"/>
</dbReference>
<dbReference type="ComplexPortal" id="CPX-6196">
    <property type="entry name" value="PAR cell polarity complex, PARD6B-PRKCZ variant"/>
</dbReference>
<dbReference type="CORUM" id="Q9BYG5"/>
<dbReference type="FunCoup" id="Q9BYG5">
    <property type="interactions" value="2221"/>
</dbReference>
<dbReference type="IntAct" id="Q9BYG5">
    <property type="interactions" value="91"/>
</dbReference>
<dbReference type="MINT" id="Q9BYG5"/>
<dbReference type="STRING" id="9606.ENSP00000360672"/>
<dbReference type="iPTMnet" id="Q9BYG5"/>
<dbReference type="PhosphoSitePlus" id="Q9BYG5"/>
<dbReference type="BioMuta" id="PARD6B"/>
<dbReference type="DMDM" id="30913176"/>
<dbReference type="jPOST" id="Q9BYG5"/>
<dbReference type="MassIVE" id="Q9BYG5"/>
<dbReference type="PaxDb" id="9606-ENSP00000360672"/>
<dbReference type="PeptideAtlas" id="Q9BYG5"/>
<dbReference type="ProteomicsDB" id="187"/>
<dbReference type="ProteomicsDB" id="79639">
    <molecule id="Q9BYG5-1"/>
</dbReference>
<dbReference type="Pumba" id="Q9BYG5"/>
<dbReference type="Antibodypedia" id="2853">
    <property type="antibodies" value="164 antibodies from 30 providers"/>
</dbReference>
<dbReference type="DNASU" id="84612"/>
<dbReference type="Ensembl" id="ENST00000371610.7">
    <molecule id="Q9BYG5-1"/>
    <property type="protein sequence ID" value="ENSP00000360672.2"/>
    <property type="gene ID" value="ENSG00000124171.9"/>
</dbReference>
<dbReference type="Ensembl" id="ENST00000396039.1">
    <molecule id="Q9BYG5-2"/>
    <property type="protein sequence ID" value="ENSP00000379354.1"/>
    <property type="gene ID" value="ENSG00000124171.9"/>
</dbReference>
<dbReference type="GeneID" id="84612"/>
<dbReference type="KEGG" id="hsa:84612"/>
<dbReference type="MANE-Select" id="ENST00000371610.7">
    <property type="protein sequence ID" value="ENSP00000360672.2"/>
    <property type="RefSeq nucleotide sequence ID" value="NM_032521.3"/>
    <property type="RefSeq protein sequence ID" value="NP_115910.1"/>
</dbReference>
<dbReference type="UCSC" id="uc002xvo.3">
    <molecule id="Q9BYG5-1"/>
    <property type="organism name" value="human"/>
</dbReference>
<dbReference type="AGR" id="HGNC:16245"/>
<dbReference type="CTD" id="84612"/>
<dbReference type="DisGeNET" id="84612"/>
<dbReference type="GeneCards" id="PARD6B"/>
<dbReference type="HGNC" id="HGNC:16245">
    <property type="gene designation" value="PARD6B"/>
</dbReference>
<dbReference type="HPA" id="ENSG00000124171">
    <property type="expression patterns" value="Tissue enhanced (kidney)"/>
</dbReference>
<dbReference type="MIM" id="608975">
    <property type="type" value="gene"/>
</dbReference>
<dbReference type="neXtProt" id="NX_Q9BYG5"/>
<dbReference type="OpenTargets" id="ENSG00000124171"/>
<dbReference type="PharmGKB" id="PA32938"/>
<dbReference type="VEuPathDB" id="HostDB:ENSG00000124171"/>
<dbReference type="eggNOG" id="KOG3606">
    <property type="taxonomic scope" value="Eukaryota"/>
</dbReference>
<dbReference type="GeneTree" id="ENSGT00950000183211"/>
<dbReference type="HOGENOM" id="CLU_040653_2_0_1"/>
<dbReference type="InParanoid" id="Q9BYG5"/>
<dbReference type="OMA" id="PGYPQQI"/>
<dbReference type="OrthoDB" id="5868434at2759"/>
<dbReference type="PAN-GO" id="Q9BYG5">
    <property type="GO annotations" value="7 GO annotations based on evolutionary models"/>
</dbReference>
<dbReference type="PhylomeDB" id="Q9BYG5"/>
<dbReference type="TreeFam" id="TF312899"/>
<dbReference type="PathwayCommons" id="Q9BYG5"/>
<dbReference type="Reactome" id="R-HSA-420029">
    <property type="pathway name" value="Tight junction interactions"/>
</dbReference>
<dbReference type="Reactome" id="R-HSA-9013424">
    <property type="pathway name" value="RHOV GTPase cycle"/>
</dbReference>
<dbReference type="SignaLink" id="Q9BYG5"/>
<dbReference type="BioGRID-ORCS" id="84612">
    <property type="hits" value="99 hits in 1157 CRISPR screens"/>
</dbReference>
<dbReference type="ChiTaRS" id="PARD6B">
    <property type="organism name" value="human"/>
</dbReference>
<dbReference type="GeneWiki" id="PARD6B"/>
<dbReference type="GenomeRNAi" id="84612"/>
<dbReference type="Pharos" id="Q9BYG5">
    <property type="development level" value="Tbio"/>
</dbReference>
<dbReference type="PRO" id="PR:Q9BYG5"/>
<dbReference type="Proteomes" id="UP000005640">
    <property type="component" value="Chromosome 20"/>
</dbReference>
<dbReference type="RNAct" id="Q9BYG5">
    <property type="molecule type" value="protein"/>
</dbReference>
<dbReference type="Bgee" id="ENSG00000124171">
    <property type="expression patterns" value="Expressed in germinal epithelium of ovary and 144 other cell types or tissues"/>
</dbReference>
<dbReference type="GO" id="GO:0016324">
    <property type="term" value="C:apical plasma membrane"/>
    <property type="evidence" value="ECO:0000318"/>
    <property type="project" value="GO_Central"/>
</dbReference>
<dbReference type="GO" id="GO:0005923">
    <property type="term" value="C:bicellular tight junction"/>
    <property type="evidence" value="ECO:0000314"/>
    <property type="project" value="UniProtKB"/>
</dbReference>
<dbReference type="GO" id="GO:0005938">
    <property type="term" value="C:cell cortex"/>
    <property type="evidence" value="ECO:0000318"/>
    <property type="project" value="GO_Central"/>
</dbReference>
<dbReference type="GO" id="GO:0030054">
    <property type="term" value="C:cell junction"/>
    <property type="evidence" value="ECO:0000314"/>
    <property type="project" value="HPA"/>
</dbReference>
<dbReference type="GO" id="GO:0005829">
    <property type="term" value="C:cytosol"/>
    <property type="evidence" value="ECO:0000314"/>
    <property type="project" value="HPA"/>
</dbReference>
<dbReference type="GO" id="GO:0070062">
    <property type="term" value="C:extracellular exosome"/>
    <property type="evidence" value="ECO:0007005"/>
    <property type="project" value="UniProtKB"/>
</dbReference>
<dbReference type="GO" id="GO:0005634">
    <property type="term" value="C:nucleus"/>
    <property type="evidence" value="ECO:0000318"/>
    <property type="project" value="GO_Central"/>
</dbReference>
<dbReference type="GO" id="GO:0120157">
    <property type="term" value="C:PAR polarity complex"/>
    <property type="evidence" value="ECO:0000250"/>
    <property type="project" value="ComplexPortal"/>
</dbReference>
<dbReference type="GO" id="GO:0005886">
    <property type="term" value="C:plasma membrane"/>
    <property type="evidence" value="ECO:0000314"/>
    <property type="project" value="HPA"/>
</dbReference>
<dbReference type="GO" id="GO:0070160">
    <property type="term" value="C:tight junction"/>
    <property type="evidence" value="ECO:0000303"/>
    <property type="project" value="ComplexPortal"/>
</dbReference>
<dbReference type="GO" id="GO:0007409">
    <property type="term" value="P:axonogenesis"/>
    <property type="evidence" value="ECO:0000304"/>
    <property type="project" value="UniProtKB"/>
</dbReference>
<dbReference type="GO" id="GO:0051301">
    <property type="term" value="P:cell division"/>
    <property type="evidence" value="ECO:0007669"/>
    <property type="project" value="UniProtKB-KW"/>
</dbReference>
<dbReference type="GO" id="GO:0007043">
    <property type="term" value="P:cell-cell junction assembly"/>
    <property type="evidence" value="ECO:0000304"/>
    <property type="project" value="UniProtKB"/>
</dbReference>
<dbReference type="GO" id="GO:0007098">
    <property type="term" value="P:centrosome cycle"/>
    <property type="evidence" value="ECO:0000318"/>
    <property type="project" value="GO_Central"/>
</dbReference>
<dbReference type="GO" id="GO:0007163">
    <property type="term" value="P:establishment or maintenance of cell polarity"/>
    <property type="evidence" value="ECO:0000318"/>
    <property type="project" value="GO_Central"/>
</dbReference>
<dbReference type="GO" id="GO:0045197">
    <property type="term" value="P:establishment or maintenance of epithelial cell apical/basal polarity"/>
    <property type="evidence" value="ECO:0000250"/>
    <property type="project" value="ComplexPortal"/>
</dbReference>
<dbReference type="GO" id="GO:0065003">
    <property type="term" value="P:protein-containing complex assembly"/>
    <property type="evidence" value="ECO:0000314"/>
    <property type="project" value="UniProtKB"/>
</dbReference>
<dbReference type="GO" id="GO:0030334">
    <property type="term" value="P:regulation of cell migration"/>
    <property type="evidence" value="ECO:0000304"/>
    <property type="project" value="UniProtKB"/>
</dbReference>
<dbReference type="GO" id="GO:0060341">
    <property type="term" value="P:regulation of cellular localization"/>
    <property type="evidence" value="ECO:0000318"/>
    <property type="project" value="GO_Central"/>
</dbReference>
<dbReference type="CDD" id="cd06403">
    <property type="entry name" value="PB1_Par6"/>
    <property type="match status" value="1"/>
</dbReference>
<dbReference type="CDD" id="cd06718">
    <property type="entry name" value="PDZ_Par6-like"/>
    <property type="match status" value="1"/>
</dbReference>
<dbReference type="FunFam" id="3.10.20.90:FF:000031">
    <property type="entry name" value="Partitioning defective 6 homolog alpha"/>
    <property type="match status" value="1"/>
</dbReference>
<dbReference type="FunFam" id="2.30.42.10:FF:000030">
    <property type="entry name" value="Partitioning defective 6 homolog beta"/>
    <property type="match status" value="1"/>
</dbReference>
<dbReference type="Gene3D" id="2.30.42.10">
    <property type="match status" value="1"/>
</dbReference>
<dbReference type="Gene3D" id="3.10.20.90">
    <property type="entry name" value="Phosphatidylinositol 3-kinase Catalytic Subunit, Chain A, domain 1"/>
    <property type="match status" value="1"/>
</dbReference>
<dbReference type="InterPro" id="IPR051741">
    <property type="entry name" value="PAR6_homolog"/>
</dbReference>
<dbReference type="InterPro" id="IPR053793">
    <property type="entry name" value="PB1-like"/>
</dbReference>
<dbReference type="InterPro" id="IPR000270">
    <property type="entry name" value="PB1_dom"/>
</dbReference>
<dbReference type="InterPro" id="IPR034868">
    <property type="entry name" value="PB1_Par6"/>
</dbReference>
<dbReference type="InterPro" id="IPR001478">
    <property type="entry name" value="PDZ"/>
</dbReference>
<dbReference type="InterPro" id="IPR036034">
    <property type="entry name" value="PDZ_sf"/>
</dbReference>
<dbReference type="PANTHER" id="PTHR14102">
    <property type="entry name" value="PAR-6-RELATED"/>
    <property type="match status" value="1"/>
</dbReference>
<dbReference type="PANTHER" id="PTHR14102:SF4">
    <property type="entry name" value="PARTITIONING DEFECTIVE 6 HOMOLOG BETA"/>
    <property type="match status" value="1"/>
</dbReference>
<dbReference type="Pfam" id="PF00564">
    <property type="entry name" value="PB1"/>
    <property type="match status" value="1"/>
</dbReference>
<dbReference type="Pfam" id="PF00595">
    <property type="entry name" value="PDZ"/>
    <property type="match status" value="1"/>
</dbReference>
<dbReference type="SMART" id="SM00666">
    <property type="entry name" value="PB1"/>
    <property type="match status" value="1"/>
</dbReference>
<dbReference type="SMART" id="SM00228">
    <property type="entry name" value="PDZ"/>
    <property type="match status" value="1"/>
</dbReference>
<dbReference type="SUPFAM" id="SSF54277">
    <property type="entry name" value="CAD &amp; PB1 domains"/>
    <property type="match status" value="1"/>
</dbReference>
<dbReference type="SUPFAM" id="SSF50156">
    <property type="entry name" value="PDZ domain-like"/>
    <property type="match status" value="1"/>
</dbReference>
<dbReference type="PROSITE" id="PS51745">
    <property type="entry name" value="PB1"/>
    <property type="match status" value="1"/>
</dbReference>
<dbReference type="PROSITE" id="PS50106">
    <property type="entry name" value="PDZ"/>
    <property type="match status" value="1"/>
</dbReference>
<organism>
    <name type="scientific">Homo sapiens</name>
    <name type="common">Human</name>
    <dbReference type="NCBI Taxonomy" id="9606"/>
    <lineage>
        <taxon>Eukaryota</taxon>
        <taxon>Metazoa</taxon>
        <taxon>Chordata</taxon>
        <taxon>Craniata</taxon>
        <taxon>Vertebrata</taxon>
        <taxon>Euteleostomi</taxon>
        <taxon>Mammalia</taxon>
        <taxon>Eutheria</taxon>
        <taxon>Euarchontoglires</taxon>
        <taxon>Primates</taxon>
        <taxon>Haplorrhini</taxon>
        <taxon>Catarrhini</taxon>
        <taxon>Hominidae</taxon>
        <taxon>Homo</taxon>
    </lineage>
</organism>
<gene>
    <name type="primary">PARD6B</name>
    <name type="synonym">PAR6B</name>
</gene>
<feature type="chain" id="PRO_0000112516" description="Partitioning defective 6 homolog beta">
    <location>
        <begin position="1"/>
        <end position="372"/>
    </location>
</feature>
<feature type="domain" description="PB1" evidence="3">
    <location>
        <begin position="16"/>
        <end position="96"/>
    </location>
</feature>
<feature type="domain" description="Pseudo-CRIB">
    <location>
        <begin position="133"/>
        <end position="150"/>
    </location>
</feature>
<feature type="domain" description="PDZ" evidence="2">
    <location>
        <begin position="157"/>
        <end position="250"/>
    </location>
</feature>
<feature type="region of interest" description="Interaction with PARD3 and CDC42" evidence="1">
    <location>
        <begin position="126"/>
        <end position="253"/>
    </location>
</feature>
<feature type="region of interest" description="Disordered" evidence="4">
    <location>
        <begin position="253"/>
        <end position="292"/>
    </location>
</feature>
<feature type="compositionally biased region" description="Polar residues" evidence="4">
    <location>
        <begin position="253"/>
        <end position="272"/>
    </location>
</feature>
<feature type="modified residue" description="Phosphoserine" evidence="11 12">
    <location>
        <position position="11"/>
    </location>
</feature>
<feature type="splice variant" id="VSP_053311" description="In isoform 2." evidence="9">
    <original>EEADYSAFGTDTLIKKK</original>
    <variation>GCVLEHSKNNVRMPCLK</variation>
    <location>
        <begin position="97"/>
        <end position="113"/>
    </location>
</feature>
<feature type="splice variant" id="VSP_053312" description="In isoform 2." evidence="9">
    <location>
        <begin position="114"/>
        <end position="370"/>
    </location>
</feature>